<feature type="chain" id="PRO_1000082622" description="Nucleotide-binding protein Bcer98_0876">
    <location>
        <begin position="1"/>
        <end position="163"/>
    </location>
</feature>
<gene>
    <name type="ordered locus">Bcer98_0876</name>
</gene>
<organism>
    <name type="scientific">Bacillus cytotoxicus (strain DSM 22905 / CIP 110041 / 391-98 / NVH 391-98)</name>
    <dbReference type="NCBI Taxonomy" id="315749"/>
    <lineage>
        <taxon>Bacteria</taxon>
        <taxon>Bacillati</taxon>
        <taxon>Bacillota</taxon>
        <taxon>Bacilli</taxon>
        <taxon>Bacillales</taxon>
        <taxon>Bacillaceae</taxon>
        <taxon>Bacillus</taxon>
        <taxon>Bacillus cereus group</taxon>
    </lineage>
</organism>
<reference key="1">
    <citation type="journal article" date="2008" name="Chem. Biol. Interact.">
        <title>Extending the Bacillus cereus group genomics to putative food-borne pathogens of different toxicity.</title>
        <authorList>
            <person name="Lapidus A."/>
            <person name="Goltsman E."/>
            <person name="Auger S."/>
            <person name="Galleron N."/>
            <person name="Segurens B."/>
            <person name="Dossat C."/>
            <person name="Land M.L."/>
            <person name="Broussolle V."/>
            <person name="Brillard J."/>
            <person name="Guinebretiere M.-H."/>
            <person name="Sanchis V."/>
            <person name="Nguen-the C."/>
            <person name="Lereclus D."/>
            <person name="Richardson P."/>
            <person name="Wincker P."/>
            <person name="Weissenbach J."/>
            <person name="Ehrlich S.D."/>
            <person name="Sorokin A."/>
        </authorList>
    </citation>
    <scope>NUCLEOTIDE SEQUENCE [LARGE SCALE GENOMIC DNA]</scope>
    <source>
        <strain>DSM 22905 / CIP 110041 / 391-98 / NVH 391-98</strain>
    </source>
</reference>
<sequence length="163" mass="18466">MAKESSFDIVSKIELPEVTNAINIALKEIQNRYDFKGSKSDIKLEKEELVLISDDEFKLEQVKDVLISKLIKRNVPIKNLNYGKVENAAGNTVRQRATLQQGIDKDNAKKINSIIKDLKLKVKTQVQDDQVRVTGKSRDDLQAVIAAIRSADLPIDVQFINYR</sequence>
<accession>A7GM53</accession>
<protein>
    <recommendedName>
        <fullName evidence="1">Nucleotide-binding protein Bcer98_0876</fullName>
    </recommendedName>
</protein>
<name>Y876_BACCN</name>
<evidence type="ECO:0000255" key="1">
    <source>
        <dbReference type="HAMAP-Rule" id="MF_00632"/>
    </source>
</evidence>
<dbReference type="EMBL" id="CP000764">
    <property type="protein sequence ID" value="ABS21211.1"/>
    <property type="molecule type" value="Genomic_DNA"/>
</dbReference>
<dbReference type="RefSeq" id="WP_011983965.1">
    <property type="nucleotide sequence ID" value="NC_009674.1"/>
</dbReference>
<dbReference type="SMR" id="A7GM53"/>
<dbReference type="STRING" id="315749.Bcer98_0876"/>
<dbReference type="GeneID" id="33896242"/>
<dbReference type="KEGG" id="bcy:Bcer98_0876"/>
<dbReference type="eggNOG" id="COG1666">
    <property type="taxonomic scope" value="Bacteria"/>
</dbReference>
<dbReference type="HOGENOM" id="CLU_099839_1_0_9"/>
<dbReference type="OrthoDB" id="9801447at2"/>
<dbReference type="Proteomes" id="UP000002300">
    <property type="component" value="Chromosome"/>
</dbReference>
<dbReference type="GO" id="GO:0005829">
    <property type="term" value="C:cytosol"/>
    <property type="evidence" value="ECO:0007669"/>
    <property type="project" value="TreeGrafter"/>
</dbReference>
<dbReference type="GO" id="GO:0000166">
    <property type="term" value="F:nucleotide binding"/>
    <property type="evidence" value="ECO:0007669"/>
    <property type="project" value="TreeGrafter"/>
</dbReference>
<dbReference type="CDD" id="cd11740">
    <property type="entry name" value="YajQ_like"/>
    <property type="match status" value="1"/>
</dbReference>
<dbReference type="FunFam" id="3.30.70.990:FF:000002">
    <property type="entry name" value="UPF0234 protein LEP1GSC067_4943"/>
    <property type="match status" value="1"/>
</dbReference>
<dbReference type="FunFam" id="3.30.70.860:FF:000003">
    <property type="entry name" value="UPF0234 protein YBT020_06460"/>
    <property type="match status" value="1"/>
</dbReference>
<dbReference type="Gene3D" id="3.30.70.860">
    <property type="match status" value="1"/>
</dbReference>
<dbReference type="Gene3D" id="3.30.70.990">
    <property type="entry name" value="YajQ-like, domain 2"/>
    <property type="match status" value="1"/>
</dbReference>
<dbReference type="HAMAP" id="MF_00632">
    <property type="entry name" value="YajQ"/>
    <property type="match status" value="1"/>
</dbReference>
<dbReference type="InterPro" id="IPR007551">
    <property type="entry name" value="DUF520"/>
</dbReference>
<dbReference type="InterPro" id="IPR035571">
    <property type="entry name" value="UPF0234-like_C"/>
</dbReference>
<dbReference type="InterPro" id="IPR035570">
    <property type="entry name" value="UPF0234_N"/>
</dbReference>
<dbReference type="InterPro" id="IPR036183">
    <property type="entry name" value="YajQ-like_sf"/>
</dbReference>
<dbReference type="NCBIfam" id="NF003819">
    <property type="entry name" value="PRK05412.1"/>
    <property type="match status" value="1"/>
</dbReference>
<dbReference type="PANTHER" id="PTHR30476">
    <property type="entry name" value="UPF0234 PROTEIN YAJQ"/>
    <property type="match status" value="1"/>
</dbReference>
<dbReference type="PANTHER" id="PTHR30476:SF0">
    <property type="entry name" value="UPF0234 PROTEIN YAJQ"/>
    <property type="match status" value="1"/>
</dbReference>
<dbReference type="Pfam" id="PF04461">
    <property type="entry name" value="DUF520"/>
    <property type="match status" value="1"/>
</dbReference>
<dbReference type="SUPFAM" id="SSF89963">
    <property type="entry name" value="YajQ-like"/>
    <property type="match status" value="2"/>
</dbReference>
<comment type="function">
    <text evidence="1">Nucleotide-binding protein.</text>
</comment>
<comment type="similarity">
    <text evidence="1">Belongs to the YajQ family.</text>
</comment>
<proteinExistence type="inferred from homology"/>
<keyword id="KW-0547">Nucleotide-binding</keyword>